<comment type="function">
    <text evidence="1">Catalyzes the transfer of a methyl group from 5-methyltetrahydrofolate to homocysteine resulting in methionine formation.</text>
</comment>
<comment type="catalytic activity">
    <reaction evidence="1">
        <text>5-methyltetrahydropteroyltri-L-glutamate + L-homocysteine = tetrahydropteroyltri-L-glutamate + L-methionine</text>
        <dbReference type="Rhea" id="RHEA:21196"/>
        <dbReference type="ChEBI" id="CHEBI:57844"/>
        <dbReference type="ChEBI" id="CHEBI:58140"/>
        <dbReference type="ChEBI" id="CHEBI:58199"/>
        <dbReference type="ChEBI" id="CHEBI:58207"/>
        <dbReference type="EC" id="2.1.1.14"/>
    </reaction>
</comment>
<comment type="cofactor">
    <cofactor evidence="1">
        <name>Zn(2+)</name>
        <dbReference type="ChEBI" id="CHEBI:29105"/>
    </cofactor>
    <text evidence="1">Binds 1 zinc ion per subunit.</text>
</comment>
<comment type="pathway">
    <text evidence="1">Amino-acid biosynthesis; L-methionine biosynthesis via de novo pathway; L-methionine from L-homocysteine (MetE route): step 1/1.</text>
</comment>
<comment type="similarity">
    <text evidence="1">Belongs to the vitamin-B12 independent methionine synthase family.</text>
</comment>
<reference key="1">
    <citation type="journal article" date="2002" name="Nucleic Acids Res.">
        <title>Genome sequence of Shigella flexneri 2a: insights into pathogenicity through comparison with genomes of Escherichia coli K12 and O157.</title>
        <authorList>
            <person name="Jin Q."/>
            <person name="Yuan Z."/>
            <person name="Xu J."/>
            <person name="Wang Y."/>
            <person name="Shen Y."/>
            <person name="Lu W."/>
            <person name="Wang J."/>
            <person name="Liu H."/>
            <person name="Yang J."/>
            <person name="Yang F."/>
            <person name="Zhang X."/>
            <person name="Zhang J."/>
            <person name="Yang G."/>
            <person name="Wu H."/>
            <person name="Qu D."/>
            <person name="Dong J."/>
            <person name="Sun L."/>
            <person name="Xue Y."/>
            <person name="Zhao A."/>
            <person name="Gao Y."/>
            <person name="Zhu J."/>
            <person name="Kan B."/>
            <person name="Ding K."/>
            <person name="Chen S."/>
            <person name="Cheng H."/>
            <person name="Yao Z."/>
            <person name="He B."/>
            <person name="Chen R."/>
            <person name="Ma D."/>
            <person name="Qiang B."/>
            <person name="Wen Y."/>
            <person name="Hou Y."/>
            <person name="Yu J."/>
        </authorList>
    </citation>
    <scope>NUCLEOTIDE SEQUENCE [LARGE SCALE GENOMIC DNA]</scope>
    <source>
        <strain>301 / Serotype 2a</strain>
    </source>
</reference>
<reference key="2">
    <citation type="journal article" date="2003" name="Infect. Immun.">
        <title>Complete genome sequence and comparative genomics of Shigella flexneri serotype 2a strain 2457T.</title>
        <authorList>
            <person name="Wei J."/>
            <person name="Goldberg M.B."/>
            <person name="Burland V."/>
            <person name="Venkatesan M.M."/>
            <person name="Deng W."/>
            <person name="Fournier G."/>
            <person name="Mayhew G.F."/>
            <person name="Plunkett G. III"/>
            <person name="Rose D.J."/>
            <person name="Darling A."/>
            <person name="Mau B."/>
            <person name="Perna N.T."/>
            <person name="Payne S.M."/>
            <person name="Runyen-Janecky L.J."/>
            <person name="Zhou S."/>
            <person name="Schwartz D.C."/>
            <person name="Blattner F.R."/>
        </authorList>
    </citation>
    <scope>NUCLEOTIDE SEQUENCE [LARGE SCALE GENOMIC DNA]</scope>
    <source>
        <strain>ATCC 700930 / 2457T / Serotype 2a</strain>
    </source>
</reference>
<dbReference type="EC" id="2.1.1.14" evidence="1"/>
<dbReference type="EMBL" id="AE005674">
    <property type="protein sequence ID" value="AAN45342.1"/>
    <property type="molecule type" value="Genomic_DNA"/>
</dbReference>
<dbReference type="EMBL" id="AE014073">
    <property type="protein sequence ID" value="AAP18856.1"/>
    <property type="molecule type" value="Genomic_DNA"/>
</dbReference>
<dbReference type="RefSeq" id="NP_709635.1">
    <property type="nucleotide sequence ID" value="NC_004337.2"/>
</dbReference>
<dbReference type="RefSeq" id="WP_000153987.1">
    <property type="nucleotide sequence ID" value="NZ_WPGW01000036.1"/>
</dbReference>
<dbReference type="SMR" id="Q83IW0"/>
<dbReference type="STRING" id="198214.SF3907"/>
<dbReference type="PaxDb" id="198214-SF3907"/>
<dbReference type="GeneID" id="1026746"/>
<dbReference type="KEGG" id="sfl:SF3907"/>
<dbReference type="KEGG" id="sfx:S3848"/>
<dbReference type="PATRIC" id="fig|198214.7.peg.4607"/>
<dbReference type="HOGENOM" id="CLU_013175_0_0_6"/>
<dbReference type="UniPathway" id="UPA00051">
    <property type="reaction ID" value="UER00082"/>
</dbReference>
<dbReference type="Proteomes" id="UP000001006">
    <property type="component" value="Chromosome"/>
</dbReference>
<dbReference type="Proteomes" id="UP000002673">
    <property type="component" value="Chromosome"/>
</dbReference>
<dbReference type="GO" id="GO:0003871">
    <property type="term" value="F:5-methyltetrahydropteroyltriglutamate-homocysteine S-methyltransferase activity"/>
    <property type="evidence" value="ECO:0007669"/>
    <property type="project" value="UniProtKB-UniRule"/>
</dbReference>
<dbReference type="GO" id="GO:0008270">
    <property type="term" value="F:zinc ion binding"/>
    <property type="evidence" value="ECO:0007669"/>
    <property type="project" value="InterPro"/>
</dbReference>
<dbReference type="GO" id="GO:0009086">
    <property type="term" value="P:methionine biosynthetic process"/>
    <property type="evidence" value="ECO:0007669"/>
    <property type="project" value="UniProtKB-UniRule"/>
</dbReference>
<dbReference type="GO" id="GO:0032259">
    <property type="term" value="P:methylation"/>
    <property type="evidence" value="ECO:0007669"/>
    <property type="project" value="UniProtKB-KW"/>
</dbReference>
<dbReference type="CDD" id="cd03311">
    <property type="entry name" value="CIMS_C_terminal_like"/>
    <property type="match status" value="1"/>
</dbReference>
<dbReference type="CDD" id="cd03312">
    <property type="entry name" value="CIMS_N_terminal_like"/>
    <property type="match status" value="1"/>
</dbReference>
<dbReference type="FunFam" id="3.20.20.210:FF:000002">
    <property type="entry name" value="5-methyltetrahydropteroyltriglutamate--homocysteine methyltransferase"/>
    <property type="match status" value="1"/>
</dbReference>
<dbReference type="FunFam" id="3.20.20.210:FF:000003">
    <property type="entry name" value="5-methyltetrahydropteroyltriglutamate--homocysteine methyltransferase"/>
    <property type="match status" value="1"/>
</dbReference>
<dbReference type="Gene3D" id="3.20.20.210">
    <property type="match status" value="2"/>
</dbReference>
<dbReference type="HAMAP" id="MF_00172">
    <property type="entry name" value="Meth_synth"/>
    <property type="match status" value="1"/>
</dbReference>
<dbReference type="InterPro" id="IPR013215">
    <property type="entry name" value="Cbl-indep_Met_Synth_N"/>
</dbReference>
<dbReference type="InterPro" id="IPR006276">
    <property type="entry name" value="Cobalamin-indep_Met_synthase"/>
</dbReference>
<dbReference type="InterPro" id="IPR002629">
    <property type="entry name" value="Met_Synth_C/arc"/>
</dbReference>
<dbReference type="InterPro" id="IPR038071">
    <property type="entry name" value="UROD/MetE-like_sf"/>
</dbReference>
<dbReference type="NCBIfam" id="TIGR01371">
    <property type="entry name" value="met_syn_B12ind"/>
    <property type="match status" value="1"/>
</dbReference>
<dbReference type="NCBIfam" id="NF003556">
    <property type="entry name" value="PRK05222.1"/>
    <property type="match status" value="1"/>
</dbReference>
<dbReference type="PANTHER" id="PTHR30519">
    <property type="entry name" value="5-METHYLTETRAHYDROPTEROYLTRIGLUTAMATE--HOMOCYSTEINE METHYLTRANSFERASE"/>
    <property type="match status" value="1"/>
</dbReference>
<dbReference type="Pfam" id="PF08267">
    <property type="entry name" value="Meth_synt_1"/>
    <property type="match status" value="1"/>
</dbReference>
<dbReference type="Pfam" id="PF01717">
    <property type="entry name" value="Meth_synt_2"/>
    <property type="match status" value="1"/>
</dbReference>
<dbReference type="PIRSF" id="PIRSF000382">
    <property type="entry name" value="MeTrfase_B12_ind"/>
    <property type="match status" value="1"/>
</dbReference>
<dbReference type="SUPFAM" id="SSF51726">
    <property type="entry name" value="UROD/MetE-like"/>
    <property type="match status" value="2"/>
</dbReference>
<sequence>MTILNHTLGFPRVGLRRELKKAQESYWAGNSTREELLTVGRELRARHWDQQKQAGIDLLPVGDFAWYDHVLTTSLLLGNVPPRHQNKDGSVDIDTLFRIGRGRAPTGEPAAAAEMTKWFNTNYHYMVPEFVKGQQFKLTWTQLLEEVDEALALSHNVKPVLLGPVTYLWLGKVKGEQFDRLSLLNDILPVYQQVLAELAKRGIEWVQIDEPALVLELPQAWLDAYKPAYDALQGQVKLLLTTYFEGVTPNLDTITALPVQGLHVDLVHGKDNVVELHKRLPSDWLLSAGLINGRNVWRADLTEKYAQIKDIVGKRDLWVASSCSLLHSPIDLSVETRLDAEVKSWFAFALQKCHELALLRDALNSGDTAALAEWSAPIQARRHSTRVHNPAVEKRLAAITAQDSQRANVYEVRAEAQRARFKLPAWPTTTIGSFPQTTEIRTLRLDFKKGNLDANNYRTGIAEHIKQAIVEQERLGLDVLVHGEAERNDMVEYFGEHLDGFVFTQNGWVQSYGSRCVKPPIVIGDISRPAPITVEWAKYAQSLTDKPVKGMLTGPVTILCWSFPREDVSRETIAKQIALALRDEVADLEAAGIGIIQIDEPALREGLPLRRSDWDAYLQWGVEAFRINAAVAKDDTQIHTHMCYCEFNDIMDSIAALDADVITIETSRSDMELLESFEEFDYPNEIGPGVYDIHSPNVPSVEWIEALLKKAAKRIPAERLWVNPDCGLKTRGWPETRAALANMVQAAQNLRRG</sequence>
<keyword id="KW-0028">Amino-acid biosynthesis</keyword>
<keyword id="KW-0479">Metal-binding</keyword>
<keyword id="KW-0486">Methionine biosynthesis</keyword>
<keyword id="KW-0489">Methyltransferase</keyword>
<keyword id="KW-1185">Reference proteome</keyword>
<keyword id="KW-0677">Repeat</keyword>
<keyword id="KW-0808">Transferase</keyword>
<keyword id="KW-0862">Zinc</keyword>
<name>METE_SHIFL</name>
<proteinExistence type="inferred from homology"/>
<evidence type="ECO:0000255" key="1">
    <source>
        <dbReference type="HAMAP-Rule" id="MF_00172"/>
    </source>
</evidence>
<feature type="chain" id="PRO_0000098657" description="5-methyltetrahydropteroyltriglutamate--homocysteine methyltransferase">
    <location>
        <begin position="1"/>
        <end position="753"/>
    </location>
</feature>
<feature type="active site" description="Proton donor" evidence="1">
    <location>
        <position position="694"/>
    </location>
</feature>
<feature type="binding site" evidence="1">
    <location>
        <begin position="17"/>
        <end position="20"/>
    </location>
    <ligand>
        <name>5-methyltetrahydropteroyltri-L-glutamate</name>
        <dbReference type="ChEBI" id="CHEBI:58207"/>
    </ligand>
</feature>
<feature type="binding site" evidence="1">
    <location>
        <position position="117"/>
    </location>
    <ligand>
        <name>5-methyltetrahydropteroyltri-L-glutamate</name>
        <dbReference type="ChEBI" id="CHEBI:58207"/>
    </ligand>
</feature>
<feature type="binding site" evidence="1">
    <location>
        <begin position="431"/>
        <end position="433"/>
    </location>
    <ligand>
        <name>L-homocysteine</name>
        <dbReference type="ChEBI" id="CHEBI:58199"/>
    </ligand>
</feature>
<feature type="binding site" evidence="1">
    <location>
        <begin position="431"/>
        <end position="433"/>
    </location>
    <ligand>
        <name>L-methionine</name>
        <dbReference type="ChEBI" id="CHEBI:57844"/>
    </ligand>
</feature>
<feature type="binding site" evidence="1">
    <location>
        <position position="484"/>
    </location>
    <ligand>
        <name>L-homocysteine</name>
        <dbReference type="ChEBI" id="CHEBI:58199"/>
    </ligand>
</feature>
<feature type="binding site" evidence="1">
    <location>
        <position position="484"/>
    </location>
    <ligand>
        <name>L-methionine</name>
        <dbReference type="ChEBI" id="CHEBI:57844"/>
    </ligand>
</feature>
<feature type="binding site" evidence="1">
    <location>
        <begin position="515"/>
        <end position="516"/>
    </location>
    <ligand>
        <name>5-methyltetrahydropteroyltri-L-glutamate</name>
        <dbReference type="ChEBI" id="CHEBI:58207"/>
    </ligand>
</feature>
<feature type="binding site" evidence="1">
    <location>
        <position position="561"/>
    </location>
    <ligand>
        <name>5-methyltetrahydropteroyltri-L-glutamate</name>
        <dbReference type="ChEBI" id="CHEBI:58207"/>
    </ligand>
</feature>
<feature type="binding site" evidence="1">
    <location>
        <position position="599"/>
    </location>
    <ligand>
        <name>L-homocysteine</name>
        <dbReference type="ChEBI" id="CHEBI:58199"/>
    </ligand>
</feature>
<feature type="binding site" evidence="1">
    <location>
        <position position="599"/>
    </location>
    <ligand>
        <name>L-methionine</name>
        <dbReference type="ChEBI" id="CHEBI:57844"/>
    </ligand>
</feature>
<feature type="binding site" evidence="1">
    <location>
        <position position="605"/>
    </location>
    <ligand>
        <name>5-methyltetrahydropteroyltri-L-glutamate</name>
        <dbReference type="ChEBI" id="CHEBI:58207"/>
    </ligand>
</feature>
<feature type="binding site" evidence="1">
    <location>
        <position position="641"/>
    </location>
    <ligand>
        <name>Zn(2+)</name>
        <dbReference type="ChEBI" id="CHEBI:29105"/>
        <note>catalytic</note>
    </ligand>
</feature>
<feature type="binding site" evidence="1">
    <location>
        <position position="643"/>
    </location>
    <ligand>
        <name>Zn(2+)</name>
        <dbReference type="ChEBI" id="CHEBI:29105"/>
        <note>catalytic</note>
    </ligand>
</feature>
<feature type="binding site" evidence="1">
    <location>
        <position position="665"/>
    </location>
    <ligand>
        <name>Zn(2+)</name>
        <dbReference type="ChEBI" id="CHEBI:29105"/>
        <note>catalytic</note>
    </ligand>
</feature>
<feature type="binding site" evidence="1">
    <location>
        <position position="726"/>
    </location>
    <ligand>
        <name>Zn(2+)</name>
        <dbReference type="ChEBI" id="CHEBI:29105"/>
        <note>catalytic</note>
    </ligand>
</feature>
<protein>
    <recommendedName>
        <fullName evidence="1">5-methyltetrahydropteroyltriglutamate--homocysteine methyltransferase</fullName>
        <ecNumber evidence="1">2.1.1.14</ecNumber>
    </recommendedName>
    <alternativeName>
        <fullName evidence="1">Cobalamin-independent methionine synthase</fullName>
    </alternativeName>
    <alternativeName>
        <fullName evidence="1">Methionine synthase, vitamin-B12 independent isozyme</fullName>
    </alternativeName>
</protein>
<organism>
    <name type="scientific">Shigella flexneri</name>
    <dbReference type="NCBI Taxonomy" id="623"/>
    <lineage>
        <taxon>Bacteria</taxon>
        <taxon>Pseudomonadati</taxon>
        <taxon>Pseudomonadota</taxon>
        <taxon>Gammaproteobacteria</taxon>
        <taxon>Enterobacterales</taxon>
        <taxon>Enterobacteriaceae</taxon>
        <taxon>Shigella</taxon>
    </lineage>
</organism>
<accession>Q83IW0</accession>
<accession>Q7BZC9</accession>
<gene>
    <name evidence="1" type="primary">metE</name>
    <name type="ordered locus">SF3907</name>
    <name type="ordered locus">S3848</name>
</gene>